<keyword id="KW-0148">Chlorophyll</keyword>
<keyword id="KW-0157">Chromophore</keyword>
<keyword id="KW-0472">Membrane</keyword>
<keyword id="KW-0602">Photosynthesis</keyword>
<keyword id="KW-0604">Photosystem II</keyword>
<keyword id="KW-1185">Reference proteome</keyword>
<keyword id="KW-0793">Thylakoid</keyword>
<keyword id="KW-0812">Transmembrane</keyword>
<keyword id="KW-1133">Transmembrane helix</keyword>
<gene>
    <name evidence="1" type="primary">psbB</name>
    <name type="ordered locus">all0138</name>
</gene>
<dbReference type="EMBL" id="X58847">
    <property type="protein sequence ID" value="CAA41653.1"/>
    <property type="molecule type" value="Genomic_DNA"/>
</dbReference>
<dbReference type="EMBL" id="BA000019">
    <property type="protein sequence ID" value="BAB77662.1"/>
    <property type="molecule type" value="Genomic_DNA"/>
</dbReference>
<dbReference type="PIR" id="AB1824">
    <property type="entry name" value="AB1824"/>
</dbReference>
<dbReference type="PIR" id="JA0148">
    <property type="entry name" value="JA0148"/>
</dbReference>
<dbReference type="RefSeq" id="WP_010994315.1">
    <property type="nucleotide sequence ID" value="NZ_RSCN01000016.1"/>
</dbReference>
<dbReference type="SMR" id="P20093"/>
<dbReference type="STRING" id="103690.gene:10492143"/>
<dbReference type="GeneID" id="58724178"/>
<dbReference type="KEGG" id="ana:all0138"/>
<dbReference type="eggNOG" id="ENOG502Z7TN">
    <property type="taxonomic scope" value="Bacteria"/>
</dbReference>
<dbReference type="OrthoDB" id="501837at2"/>
<dbReference type="Proteomes" id="UP000002483">
    <property type="component" value="Chromosome"/>
</dbReference>
<dbReference type="GO" id="GO:0009523">
    <property type="term" value="C:photosystem II"/>
    <property type="evidence" value="ECO:0007669"/>
    <property type="project" value="UniProtKB-KW"/>
</dbReference>
<dbReference type="GO" id="GO:0031676">
    <property type="term" value="C:plasma membrane-derived thylakoid membrane"/>
    <property type="evidence" value="ECO:0007669"/>
    <property type="project" value="UniProtKB-SubCell"/>
</dbReference>
<dbReference type="GO" id="GO:0016168">
    <property type="term" value="F:chlorophyll binding"/>
    <property type="evidence" value="ECO:0007669"/>
    <property type="project" value="UniProtKB-UniRule"/>
</dbReference>
<dbReference type="GO" id="GO:0045156">
    <property type="term" value="F:electron transporter, transferring electrons within the cyclic electron transport pathway of photosynthesis activity"/>
    <property type="evidence" value="ECO:0007669"/>
    <property type="project" value="InterPro"/>
</dbReference>
<dbReference type="GO" id="GO:0009772">
    <property type="term" value="P:photosynthetic electron transport in photosystem II"/>
    <property type="evidence" value="ECO:0007669"/>
    <property type="project" value="InterPro"/>
</dbReference>
<dbReference type="Gene3D" id="3.10.680.10">
    <property type="entry name" value="Photosystem II CP47 reaction center protein"/>
    <property type="match status" value="1"/>
</dbReference>
<dbReference type="HAMAP" id="MF_01495">
    <property type="entry name" value="PSII_PsbB_CP47"/>
    <property type="match status" value="1"/>
</dbReference>
<dbReference type="InterPro" id="IPR000932">
    <property type="entry name" value="PS_antenna-like"/>
</dbReference>
<dbReference type="InterPro" id="IPR036001">
    <property type="entry name" value="PS_II_antenna-like_sf"/>
</dbReference>
<dbReference type="InterPro" id="IPR017486">
    <property type="entry name" value="PSII_PsbB"/>
</dbReference>
<dbReference type="NCBIfam" id="TIGR03039">
    <property type="entry name" value="PS_II_CP47"/>
    <property type="match status" value="1"/>
</dbReference>
<dbReference type="Pfam" id="PF00421">
    <property type="entry name" value="PSII"/>
    <property type="match status" value="1"/>
</dbReference>
<dbReference type="SUPFAM" id="SSF161077">
    <property type="entry name" value="Photosystem II antenna protein-like"/>
    <property type="match status" value="1"/>
</dbReference>
<accession>P20093</accession>
<organism>
    <name type="scientific">Nostoc sp. (strain PCC 7120 / SAG 25.82 / UTEX 2576)</name>
    <dbReference type="NCBI Taxonomy" id="103690"/>
    <lineage>
        <taxon>Bacteria</taxon>
        <taxon>Bacillati</taxon>
        <taxon>Cyanobacteriota</taxon>
        <taxon>Cyanophyceae</taxon>
        <taxon>Nostocales</taxon>
        <taxon>Nostocaceae</taxon>
        <taxon>Nostoc</taxon>
    </lineage>
</organism>
<proteinExistence type="inferred from homology"/>
<protein>
    <recommendedName>
        <fullName evidence="1">Photosystem II CP47 reaction center protein</fullName>
    </recommendedName>
    <alternativeName>
        <fullName evidence="1">PSII 47 kDa protein</fullName>
    </alternativeName>
    <alternativeName>
        <fullName evidence="1">Protein CP-47</fullName>
    </alternativeName>
</protein>
<reference key="1">
    <citation type="journal article" date="1989" name="Plant Mol. Biol.">
        <title>Isolation, sequence and transcription of the gene encoding the photosystem II chlorophyll-binding protein, CP-47, in the cyanobacterium Anabaena 7120.</title>
        <authorList>
            <person name="Lang J.D."/>
            <person name="Haselkorn R."/>
        </authorList>
    </citation>
    <scope>NUCLEOTIDE SEQUENCE [GENOMIC DNA]</scope>
</reference>
<reference key="2">
    <citation type="journal article" date="2001" name="DNA Res.">
        <title>Complete genomic sequence of the filamentous nitrogen-fixing cyanobacterium Anabaena sp. strain PCC 7120.</title>
        <authorList>
            <person name="Kaneko T."/>
            <person name="Nakamura Y."/>
            <person name="Wolk C.P."/>
            <person name="Kuritz T."/>
            <person name="Sasamoto S."/>
            <person name="Watanabe A."/>
            <person name="Iriguchi M."/>
            <person name="Ishikawa A."/>
            <person name="Kawashima K."/>
            <person name="Kimura T."/>
            <person name="Kishida Y."/>
            <person name="Kohara M."/>
            <person name="Matsumoto M."/>
            <person name="Matsuno A."/>
            <person name="Muraki A."/>
            <person name="Nakazaki N."/>
            <person name="Shimpo S."/>
            <person name="Sugimoto M."/>
            <person name="Takazawa M."/>
            <person name="Yamada M."/>
            <person name="Yasuda M."/>
            <person name="Tabata S."/>
        </authorList>
    </citation>
    <scope>NUCLEOTIDE SEQUENCE [LARGE SCALE GENOMIC DNA]</scope>
    <source>
        <strain>PCC 7120 / SAG 25.82 / UTEX 2576</strain>
    </source>
</reference>
<sequence length="509" mass="56318">MGLPWYRVHTVVLNDPGRLISVHLMHTALVAGWAGSMALYELAIYDPSDPVLNPMWRQGMFVLPFMARLGVTQSWGGWSVTGGTATDPGFWSFEGVAAAHIVLSGLLFLAAVWHWVYWDLELFRDPRTGEPALDLPKMFGIHLFLSGLLCFGFGAFHLTGLFGPGMWISDPYGVTGSVQPVAPEWGPDGFNPFNPGGVVAHHIAAGIVGIIAGLFHLTVRPPERLYKALRMGNIETVLSSSIAAVFFAAFVVAGTMWYGNATTPIELFGPTRYQWDQGYFHQEIERRVQSSVAQGASLSEAWSQIPEKLAFYDYVGNSPAKGGLFRTGPMVKGDGIAQSWQGHGVFKDAEGRELTVRRLPNFFETFPVILTDADGVVRADIPFRRAESKYSFEQSGVTVSFYGGDLDGKTFTDPADVKKYARKAQGGEIFEFDRETLNSDGVFRTSPRGWFTFGHAVFALLFFFGHLWHGARTIYRDVFAGVEADLEEQVEWGLFQKVGDKSTRVRKEA</sequence>
<name>PSBB_NOSS1</name>
<evidence type="ECO:0000255" key="1">
    <source>
        <dbReference type="HAMAP-Rule" id="MF_01495"/>
    </source>
</evidence>
<comment type="function">
    <text evidence="1">One of the components of the core complex of photosystem II (PSII). It binds chlorophyll and helps catalyze the primary light-induced photochemical processes of PSII. PSII is a light-driven water:plastoquinone oxidoreductase, using light energy to abstract electrons from H(2)O, generating O(2) and a proton gradient subsequently used for ATP formation.</text>
</comment>
<comment type="cofactor">
    <text evidence="1">Binds multiple chlorophylls. PSII binds additional chlorophylls, carotenoids and specific lipids.</text>
</comment>
<comment type="subunit">
    <text evidence="1">PSII is composed of 1 copy each of membrane proteins PsbA, PsbB, PsbC, PsbD, PsbE, PsbF, PsbH, PsbI, PsbJ, PsbK, PsbL, PsbM, PsbT, PsbX, PsbY, PsbZ, Psb30/Ycf12, peripheral proteins PsbO, CyanoQ (PsbQ), PsbU, PsbV and a large number of cofactors. It forms dimeric complexes.</text>
</comment>
<comment type="subcellular location">
    <subcellularLocation>
        <location evidence="1">Cellular thylakoid membrane</location>
        <topology evidence="1">Multi-pass membrane protein</topology>
    </subcellularLocation>
</comment>
<comment type="similarity">
    <text evidence="1">Belongs to the PsbB/PsbC family. PsbB subfamily.</text>
</comment>
<feature type="chain" id="PRO_0000077501" description="Photosystem II CP47 reaction center protein">
    <location>
        <begin position="1"/>
        <end position="509"/>
    </location>
</feature>
<feature type="transmembrane region" description="Helical" evidence="1">
    <location>
        <begin position="21"/>
        <end position="36"/>
    </location>
</feature>
<feature type="transmembrane region" description="Helical" evidence="1">
    <location>
        <begin position="101"/>
        <end position="115"/>
    </location>
</feature>
<feature type="transmembrane region" description="Helical" evidence="1">
    <location>
        <begin position="140"/>
        <end position="156"/>
    </location>
</feature>
<feature type="transmembrane region" description="Helical" evidence="1">
    <location>
        <begin position="203"/>
        <end position="218"/>
    </location>
</feature>
<feature type="transmembrane region" description="Helical" evidence="1">
    <location>
        <begin position="237"/>
        <end position="252"/>
    </location>
</feature>
<feature type="transmembrane region" description="Helical" evidence="1">
    <location>
        <begin position="457"/>
        <end position="472"/>
    </location>
</feature>